<keyword id="KW-0963">Cytoplasm</keyword>
<keyword id="KW-0413">Isomerase</keyword>
<keyword id="KW-0627">Porphyrin biosynthesis</keyword>
<keyword id="KW-0663">Pyridoxal phosphate</keyword>
<dbReference type="EC" id="5.4.3.8" evidence="1"/>
<dbReference type="EMBL" id="CP001598">
    <property type="protein sequence ID" value="ACQ50149.1"/>
    <property type="molecule type" value="Genomic_DNA"/>
</dbReference>
<dbReference type="RefSeq" id="WP_000260527.1">
    <property type="nucleotide sequence ID" value="NC_012659.1"/>
</dbReference>
<dbReference type="SMR" id="C3PCZ3"/>
<dbReference type="GeneID" id="45020579"/>
<dbReference type="KEGG" id="bai:BAA_0593"/>
<dbReference type="HOGENOM" id="CLU_016922_1_5_9"/>
<dbReference type="UniPathway" id="UPA00251">
    <property type="reaction ID" value="UER00317"/>
</dbReference>
<dbReference type="GO" id="GO:0005737">
    <property type="term" value="C:cytoplasm"/>
    <property type="evidence" value="ECO:0007669"/>
    <property type="project" value="UniProtKB-SubCell"/>
</dbReference>
<dbReference type="GO" id="GO:0042286">
    <property type="term" value="F:glutamate-1-semialdehyde 2,1-aminomutase activity"/>
    <property type="evidence" value="ECO:0007669"/>
    <property type="project" value="UniProtKB-UniRule"/>
</dbReference>
<dbReference type="GO" id="GO:0030170">
    <property type="term" value="F:pyridoxal phosphate binding"/>
    <property type="evidence" value="ECO:0007669"/>
    <property type="project" value="InterPro"/>
</dbReference>
<dbReference type="GO" id="GO:0008483">
    <property type="term" value="F:transaminase activity"/>
    <property type="evidence" value="ECO:0007669"/>
    <property type="project" value="InterPro"/>
</dbReference>
<dbReference type="GO" id="GO:0006782">
    <property type="term" value="P:protoporphyrinogen IX biosynthetic process"/>
    <property type="evidence" value="ECO:0007669"/>
    <property type="project" value="UniProtKB-UniRule"/>
</dbReference>
<dbReference type="CDD" id="cd00610">
    <property type="entry name" value="OAT_like"/>
    <property type="match status" value="1"/>
</dbReference>
<dbReference type="FunFam" id="3.40.640.10:FF:000021">
    <property type="entry name" value="Glutamate-1-semialdehyde 2,1-aminomutase"/>
    <property type="match status" value="1"/>
</dbReference>
<dbReference type="Gene3D" id="3.90.1150.10">
    <property type="entry name" value="Aspartate Aminotransferase, domain 1"/>
    <property type="match status" value="1"/>
</dbReference>
<dbReference type="Gene3D" id="3.40.640.10">
    <property type="entry name" value="Type I PLP-dependent aspartate aminotransferase-like (Major domain)"/>
    <property type="match status" value="1"/>
</dbReference>
<dbReference type="HAMAP" id="MF_00375">
    <property type="entry name" value="HemL_aminotrans_3"/>
    <property type="match status" value="1"/>
</dbReference>
<dbReference type="InterPro" id="IPR004639">
    <property type="entry name" value="4pyrrol_synth_GluAld_NH2Trfase"/>
</dbReference>
<dbReference type="InterPro" id="IPR005814">
    <property type="entry name" value="Aminotrans_3"/>
</dbReference>
<dbReference type="InterPro" id="IPR049704">
    <property type="entry name" value="Aminotrans_3_PPA_site"/>
</dbReference>
<dbReference type="InterPro" id="IPR015424">
    <property type="entry name" value="PyrdxlP-dep_Trfase"/>
</dbReference>
<dbReference type="InterPro" id="IPR015421">
    <property type="entry name" value="PyrdxlP-dep_Trfase_major"/>
</dbReference>
<dbReference type="InterPro" id="IPR015422">
    <property type="entry name" value="PyrdxlP-dep_Trfase_small"/>
</dbReference>
<dbReference type="NCBIfam" id="TIGR00713">
    <property type="entry name" value="hemL"/>
    <property type="match status" value="1"/>
</dbReference>
<dbReference type="NCBIfam" id="NF000818">
    <property type="entry name" value="PRK00062.1"/>
    <property type="match status" value="1"/>
</dbReference>
<dbReference type="NCBIfam" id="NF009055">
    <property type="entry name" value="PRK12389.1"/>
    <property type="match status" value="1"/>
</dbReference>
<dbReference type="PANTHER" id="PTHR43713">
    <property type="entry name" value="GLUTAMATE-1-SEMIALDEHYDE 2,1-AMINOMUTASE"/>
    <property type="match status" value="1"/>
</dbReference>
<dbReference type="PANTHER" id="PTHR43713:SF1">
    <property type="entry name" value="GLUTAMATE-1-SEMIALDEHYDE 2,1-AMINOMUTASE 2"/>
    <property type="match status" value="1"/>
</dbReference>
<dbReference type="Pfam" id="PF00202">
    <property type="entry name" value="Aminotran_3"/>
    <property type="match status" value="1"/>
</dbReference>
<dbReference type="SUPFAM" id="SSF53383">
    <property type="entry name" value="PLP-dependent transferases"/>
    <property type="match status" value="1"/>
</dbReference>
<dbReference type="PROSITE" id="PS00600">
    <property type="entry name" value="AA_TRANSFER_CLASS_3"/>
    <property type="match status" value="1"/>
</dbReference>
<sequence length="434" mass="46432">MVVKFTKSEALHKEALEHIVGGVNSPSRSFKAVGGGAPIAMERGKGAYFWDVDGNKYIDYLAAYGPIITGHAHPHITKAITTAAENGVLYGTPTALEVKFAKMLKEAMPALDKVRFVNSGTEAVMTTIRVARAYTGRTKIMKFAGCYHGHSDLVLVAAGSGPSTLGTPDSAGVPQSIAQEVITVPFNNVETLKEALDKWGHEVAAILVEPIVGNFGIVEPKPGFLEKVNELVHEAGALVIYDEVITAFRFMYGGAQDLLGVTPDLTALGKVIGGGLPIGAYGGKKEIMEQVAPLGPAYQAGTMAGNPASMASGIACLEVLQQEGLYEKLDELGAMLEKGILEQAAKHNIDITLNRLKGALTVYFTTNTIEDYDAAQDTDGEMFGKFFKLMLQEGVNLAPSKYEAWFLTTEHTKEDIEYTIEAVGRAFAALADNK</sequence>
<organism>
    <name type="scientific">Bacillus anthracis (strain A0248)</name>
    <dbReference type="NCBI Taxonomy" id="592021"/>
    <lineage>
        <taxon>Bacteria</taxon>
        <taxon>Bacillati</taxon>
        <taxon>Bacillota</taxon>
        <taxon>Bacilli</taxon>
        <taxon>Bacillales</taxon>
        <taxon>Bacillaceae</taxon>
        <taxon>Bacillus</taxon>
        <taxon>Bacillus cereus group</taxon>
    </lineage>
</organism>
<gene>
    <name evidence="1" type="primary">hemL1</name>
    <name type="ordered locus">BAA_0593</name>
</gene>
<feature type="chain" id="PRO_0000382259" description="Glutamate-1-semialdehyde 2,1-aminomutase 1">
    <location>
        <begin position="1"/>
        <end position="434"/>
    </location>
</feature>
<feature type="modified residue" description="N6-(pyridoxal phosphate)lysine" evidence="1">
    <location>
        <position position="270"/>
    </location>
</feature>
<accession>C3PCZ3</accession>
<reference key="1">
    <citation type="submission" date="2009-04" db="EMBL/GenBank/DDBJ databases">
        <title>Genome sequence of Bacillus anthracis A0248.</title>
        <authorList>
            <person name="Dodson R.J."/>
            <person name="Munk A.C."/>
            <person name="Bruce D."/>
            <person name="Detter C."/>
            <person name="Tapia R."/>
            <person name="Sutton G."/>
            <person name="Sims D."/>
            <person name="Brettin T."/>
        </authorList>
    </citation>
    <scope>NUCLEOTIDE SEQUENCE [LARGE SCALE GENOMIC DNA]</scope>
    <source>
        <strain>A0248</strain>
    </source>
</reference>
<comment type="catalytic activity">
    <reaction evidence="1">
        <text>(S)-4-amino-5-oxopentanoate = 5-aminolevulinate</text>
        <dbReference type="Rhea" id="RHEA:14265"/>
        <dbReference type="ChEBI" id="CHEBI:57501"/>
        <dbReference type="ChEBI" id="CHEBI:356416"/>
        <dbReference type="EC" id="5.4.3.8"/>
    </reaction>
</comment>
<comment type="cofactor">
    <cofactor evidence="1">
        <name>pyridoxal 5'-phosphate</name>
        <dbReference type="ChEBI" id="CHEBI:597326"/>
    </cofactor>
</comment>
<comment type="pathway">
    <text evidence="1">Porphyrin-containing compound metabolism; protoporphyrin-IX biosynthesis; 5-aminolevulinate from L-glutamyl-tRNA(Glu): step 2/2.</text>
</comment>
<comment type="subunit">
    <text evidence="1">Homodimer.</text>
</comment>
<comment type="subcellular location">
    <subcellularLocation>
        <location evidence="1">Cytoplasm</location>
    </subcellularLocation>
</comment>
<comment type="similarity">
    <text evidence="1">Belongs to the class-III pyridoxal-phosphate-dependent aminotransferase family. HemL subfamily.</text>
</comment>
<evidence type="ECO:0000255" key="1">
    <source>
        <dbReference type="HAMAP-Rule" id="MF_00375"/>
    </source>
</evidence>
<proteinExistence type="inferred from homology"/>
<name>GSA1_BACAA</name>
<protein>
    <recommendedName>
        <fullName evidence="1">Glutamate-1-semialdehyde 2,1-aminomutase 1</fullName>
        <shortName evidence="1">GSA 1</shortName>
        <ecNumber evidence="1">5.4.3.8</ecNumber>
    </recommendedName>
    <alternativeName>
        <fullName evidence="1">Glutamate-1-semialdehyde aminotransferase 1</fullName>
        <shortName evidence="1">GSA-AT 1</shortName>
    </alternativeName>
</protein>